<proteinExistence type="inferred from homology"/>
<feature type="chain" id="PRO_0000325847" description="Ragulator complex protein LAMTOR4 homolog">
    <location>
        <begin position="1"/>
        <end position="121"/>
    </location>
</feature>
<feature type="region of interest" description="Disordered" evidence="2">
    <location>
        <begin position="91"/>
        <end position="121"/>
    </location>
</feature>
<feature type="compositionally biased region" description="Polar residues" evidence="2">
    <location>
        <begin position="112"/>
        <end position="121"/>
    </location>
</feature>
<organism>
    <name type="scientific">Drosophila pseudoobscura pseudoobscura</name>
    <name type="common">Fruit fly</name>
    <dbReference type="NCBI Taxonomy" id="46245"/>
    <lineage>
        <taxon>Eukaryota</taxon>
        <taxon>Metazoa</taxon>
        <taxon>Ecdysozoa</taxon>
        <taxon>Arthropoda</taxon>
        <taxon>Hexapoda</taxon>
        <taxon>Insecta</taxon>
        <taxon>Pterygota</taxon>
        <taxon>Neoptera</taxon>
        <taxon>Endopterygota</taxon>
        <taxon>Diptera</taxon>
        <taxon>Brachycera</taxon>
        <taxon>Muscomorpha</taxon>
        <taxon>Ephydroidea</taxon>
        <taxon>Drosophilidae</taxon>
        <taxon>Drosophila</taxon>
        <taxon>Sophophora</taxon>
    </lineage>
</organism>
<name>LTOR4_DROPS</name>
<comment type="function">
    <text evidence="1">Regulator of the TOR pathway, a signaling cascade that promotes cell growth in response to growth factors, energy levels, and amino acids. As part of the Ragulator complex, may activate the TOR signaling cascade in response to amino acids (By similarity).</text>
</comment>
<comment type="subunit">
    <text evidence="1">Part of the Ragulator complex.</text>
</comment>
<comment type="subcellular location">
    <subcellularLocation>
        <location evidence="1">Lysosome</location>
    </subcellularLocation>
</comment>
<comment type="similarity">
    <text evidence="3">Belongs to the LAMTOR4 family.</text>
</comment>
<evidence type="ECO:0000250" key="1"/>
<evidence type="ECO:0000256" key="2">
    <source>
        <dbReference type="SAM" id="MobiDB-lite"/>
    </source>
</evidence>
<evidence type="ECO:0000305" key="3"/>
<keyword id="KW-0458">Lysosome</keyword>
<keyword id="KW-1185">Reference proteome</keyword>
<dbReference type="EMBL" id="CH379070">
    <property type="protein sequence ID" value="EAL29913.1"/>
    <property type="molecule type" value="Genomic_DNA"/>
</dbReference>
<dbReference type="SMR" id="Q29EZ6"/>
<dbReference type="FunCoup" id="Q29EZ6">
    <property type="interactions" value="731"/>
</dbReference>
<dbReference type="STRING" id="46245.Q29EZ6"/>
<dbReference type="eggNOG" id="ENOG502S3B2">
    <property type="taxonomic scope" value="Eukaryota"/>
</dbReference>
<dbReference type="HOGENOM" id="CLU_137556_0_0_1"/>
<dbReference type="InParanoid" id="Q29EZ6"/>
<dbReference type="OMA" id="DESFMPN"/>
<dbReference type="PhylomeDB" id="Q29EZ6"/>
<dbReference type="Proteomes" id="UP000001819">
    <property type="component" value="Unplaced"/>
</dbReference>
<dbReference type="GO" id="GO:0005764">
    <property type="term" value="C:lysosome"/>
    <property type="evidence" value="ECO:0000250"/>
    <property type="project" value="UniProtKB"/>
</dbReference>
<dbReference type="GO" id="GO:0071986">
    <property type="term" value="C:Ragulator complex"/>
    <property type="evidence" value="ECO:0000250"/>
    <property type="project" value="UniProtKB"/>
</dbReference>
<dbReference type="GO" id="GO:0005085">
    <property type="term" value="F:guanyl-nucleotide exchange factor activity"/>
    <property type="evidence" value="ECO:0007669"/>
    <property type="project" value="TreeGrafter"/>
</dbReference>
<dbReference type="GO" id="GO:0071230">
    <property type="term" value="P:cellular response to amino acid stimulus"/>
    <property type="evidence" value="ECO:0000250"/>
    <property type="project" value="UniProtKB"/>
</dbReference>
<dbReference type="GO" id="GO:0032008">
    <property type="term" value="P:positive regulation of TOR signaling"/>
    <property type="evidence" value="ECO:0000250"/>
    <property type="project" value="UniProtKB"/>
</dbReference>
<dbReference type="GO" id="GO:0061462">
    <property type="term" value="P:protein localization to lysosome"/>
    <property type="evidence" value="ECO:0000250"/>
    <property type="project" value="UniProtKB"/>
</dbReference>
<dbReference type="GO" id="GO:0008361">
    <property type="term" value="P:regulation of cell size"/>
    <property type="evidence" value="ECO:0000250"/>
    <property type="project" value="UniProtKB"/>
</dbReference>
<dbReference type="InterPro" id="IPR034601">
    <property type="entry name" value="LAMTOR4"/>
</dbReference>
<dbReference type="PANTHER" id="PTHR33967">
    <property type="entry name" value="RAGULATOR COMPLEX PROTEIN LAMTOR4"/>
    <property type="match status" value="1"/>
</dbReference>
<dbReference type="PANTHER" id="PTHR33967:SF1">
    <property type="entry name" value="RAGULATOR COMPLEX PROTEIN LAMTOR4"/>
    <property type="match status" value="1"/>
</dbReference>
<sequence length="121" mass="13296">MDKEKLIAPNQMGYLILKDDGNLLDSGGDLKNDDRSANVIMGLLNLTDSIDEDFMPNSSCERITIDYDQHYYSICMSNRRIYVVKLSKTHTQNGATTSSSSSTSYNDAAEGNNISSSTVLA</sequence>
<gene>
    <name type="ORF">GA13399</name>
</gene>
<reference key="1">
    <citation type="journal article" date="2005" name="Genome Res.">
        <title>Comparative genome sequencing of Drosophila pseudoobscura: chromosomal, gene, and cis-element evolution.</title>
        <authorList>
            <person name="Richards S."/>
            <person name="Liu Y."/>
            <person name="Bettencourt B.R."/>
            <person name="Hradecky P."/>
            <person name="Letovsky S."/>
            <person name="Nielsen R."/>
            <person name="Thornton K."/>
            <person name="Hubisz M.J."/>
            <person name="Chen R."/>
            <person name="Meisel R.P."/>
            <person name="Couronne O."/>
            <person name="Hua S."/>
            <person name="Smith M.A."/>
            <person name="Zhang P."/>
            <person name="Liu J."/>
            <person name="Bussemaker H.J."/>
            <person name="van Batenburg M.F."/>
            <person name="Howells S.L."/>
            <person name="Scherer S.E."/>
            <person name="Sodergren E."/>
            <person name="Matthews B.B."/>
            <person name="Crosby M.A."/>
            <person name="Schroeder A.J."/>
            <person name="Ortiz-Barrientos D."/>
            <person name="Rives C.M."/>
            <person name="Metzker M.L."/>
            <person name="Muzny D.M."/>
            <person name="Scott G."/>
            <person name="Steffen D."/>
            <person name="Wheeler D.A."/>
            <person name="Worley K.C."/>
            <person name="Havlak P."/>
            <person name="Durbin K.J."/>
            <person name="Egan A."/>
            <person name="Gill R."/>
            <person name="Hume J."/>
            <person name="Morgan M.B."/>
            <person name="Miner G."/>
            <person name="Hamilton C."/>
            <person name="Huang Y."/>
            <person name="Waldron L."/>
            <person name="Verduzco D."/>
            <person name="Clerc-Blankenburg K.P."/>
            <person name="Dubchak I."/>
            <person name="Noor M.A.F."/>
            <person name="Anderson W."/>
            <person name="White K.P."/>
            <person name="Clark A.G."/>
            <person name="Schaeffer S.W."/>
            <person name="Gelbart W.M."/>
            <person name="Weinstock G.M."/>
            <person name="Gibbs R.A."/>
        </authorList>
    </citation>
    <scope>NUCLEOTIDE SEQUENCE [LARGE SCALE GENOMIC DNA]</scope>
    <source>
        <strain>MV2-25 / Tucson 14011-0121.94</strain>
    </source>
</reference>
<accession>Q29EZ6</accession>
<protein>
    <recommendedName>
        <fullName>Ragulator complex protein LAMTOR4 homolog</fullName>
    </recommendedName>
    <alternativeName>
        <fullName>Late endosomal/lysosomal adaptor and MAPK and MTOR activator 4</fullName>
    </alternativeName>
</protein>